<evidence type="ECO:0000255" key="1">
    <source>
        <dbReference type="HAMAP-Rule" id="MF_00376"/>
    </source>
</evidence>
<accession>Q72K90</accession>
<feature type="chain" id="PRO_0000173022" description="Dephospho-CoA kinase">
    <location>
        <begin position="1"/>
        <end position="203"/>
    </location>
</feature>
<feature type="domain" description="DPCK" evidence="1">
    <location>
        <begin position="10"/>
        <end position="203"/>
    </location>
</feature>
<feature type="binding site" evidence="1">
    <location>
        <begin position="18"/>
        <end position="23"/>
    </location>
    <ligand>
        <name>ATP</name>
        <dbReference type="ChEBI" id="CHEBI:30616"/>
    </ligand>
</feature>
<sequence>MGHEAKHPIIIGITGNIGSGKSTVAALLRSWGYPVLDLDALAARARENKEEELKRLFPEAVVGGRLDRRALARLVFSDPERLKALEAVVHPEVRRLLMEELSRLEAPLVFLEIPLLFEKGWEGRLHGTLLVAAPLEERVRRVMARSGLSREEVLARERAQMPEEEKRKRATWVLENTGSLEDLERALKAVLAELTGGAKGGRG</sequence>
<dbReference type="EC" id="2.7.1.24" evidence="1"/>
<dbReference type="EMBL" id="AE017221">
    <property type="protein sequence ID" value="AAS80905.1"/>
    <property type="molecule type" value="Genomic_DNA"/>
</dbReference>
<dbReference type="RefSeq" id="WP_011173002.1">
    <property type="nucleotide sequence ID" value="NC_005835.1"/>
</dbReference>
<dbReference type="SMR" id="Q72K90"/>
<dbReference type="GeneID" id="3169510"/>
<dbReference type="KEGG" id="tth:TT_C0557"/>
<dbReference type="eggNOG" id="COG0237">
    <property type="taxonomic scope" value="Bacteria"/>
</dbReference>
<dbReference type="HOGENOM" id="CLU_057180_1_1_0"/>
<dbReference type="OrthoDB" id="9812943at2"/>
<dbReference type="UniPathway" id="UPA00241">
    <property type="reaction ID" value="UER00356"/>
</dbReference>
<dbReference type="Proteomes" id="UP000000592">
    <property type="component" value="Chromosome"/>
</dbReference>
<dbReference type="GO" id="GO:0005737">
    <property type="term" value="C:cytoplasm"/>
    <property type="evidence" value="ECO:0007669"/>
    <property type="project" value="UniProtKB-SubCell"/>
</dbReference>
<dbReference type="GO" id="GO:0005524">
    <property type="term" value="F:ATP binding"/>
    <property type="evidence" value="ECO:0007669"/>
    <property type="project" value="UniProtKB-UniRule"/>
</dbReference>
<dbReference type="GO" id="GO:0004140">
    <property type="term" value="F:dephospho-CoA kinase activity"/>
    <property type="evidence" value="ECO:0007669"/>
    <property type="project" value="UniProtKB-UniRule"/>
</dbReference>
<dbReference type="GO" id="GO:0015937">
    <property type="term" value="P:coenzyme A biosynthetic process"/>
    <property type="evidence" value="ECO:0007669"/>
    <property type="project" value="UniProtKB-UniRule"/>
</dbReference>
<dbReference type="CDD" id="cd02022">
    <property type="entry name" value="DPCK"/>
    <property type="match status" value="1"/>
</dbReference>
<dbReference type="Gene3D" id="3.40.50.300">
    <property type="entry name" value="P-loop containing nucleotide triphosphate hydrolases"/>
    <property type="match status" value="1"/>
</dbReference>
<dbReference type="HAMAP" id="MF_00376">
    <property type="entry name" value="Dephospho_CoA_kinase"/>
    <property type="match status" value="1"/>
</dbReference>
<dbReference type="InterPro" id="IPR001977">
    <property type="entry name" value="Depp_CoAkinase"/>
</dbReference>
<dbReference type="InterPro" id="IPR027417">
    <property type="entry name" value="P-loop_NTPase"/>
</dbReference>
<dbReference type="NCBIfam" id="TIGR00152">
    <property type="entry name" value="dephospho-CoA kinase"/>
    <property type="match status" value="1"/>
</dbReference>
<dbReference type="PANTHER" id="PTHR10695:SF46">
    <property type="entry name" value="BIFUNCTIONAL COENZYME A SYNTHASE-RELATED"/>
    <property type="match status" value="1"/>
</dbReference>
<dbReference type="PANTHER" id="PTHR10695">
    <property type="entry name" value="DEPHOSPHO-COA KINASE-RELATED"/>
    <property type="match status" value="1"/>
</dbReference>
<dbReference type="Pfam" id="PF01121">
    <property type="entry name" value="CoaE"/>
    <property type="match status" value="1"/>
</dbReference>
<dbReference type="SUPFAM" id="SSF52540">
    <property type="entry name" value="P-loop containing nucleoside triphosphate hydrolases"/>
    <property type="match status" value="1"/>
</dbReference>
<dbReference type="PROSITE" id="PS51219">
    <property type="entry name" value="DPCK"/>
    <property type="match status" value="1"/>
</dbReference>
<organism>
    <name type="scientific">Thermus thermophilus (strain ATCC BAA-163 / DSM 7039 / HB27)</name>
    <dbReference type="NCBI Taxonomy" id="262724"/>
    <lineage>
        <taxon>Bacteria</taxon>
        <taxon>Thermotogati</taxon>
        <taxon>Deinococcota</taxon>
        <taxon>Deinococci</taxon>
        <taxon>Thermales</taxon>
        <taxon>Thermaceae</taxon>
        <taxon>Thermus</taxon>
    </lineage>
</organism>
<comment type="function">
    <text evidence="1">Catalyzes the phosphorylation of the 3'-hydroxyl group of dephosphocoenzyme A to form coenzyme A.</text>
</comment>
<comment type="catalytic activity">
    <reaction evidence="1">
        <text>3'-dephospho-CoA + ATP = ADP + CoA + H(+)</text>
        <dbReference type="Rhea" id="RHEA:18245"/>
        <dbReference type="ChEBI" id="CHEBI:15378"/>
        <dbReference type="ChEBI" id="CHEBI:30616"/>
        <dbReference type="ChEBI" id="CHEBI:57287"/>
        <dbReference type="ChEBI" id="CHEBI:57328"/>
        <dbReference type="ChEBI" id="CHEBI:456216"/>
        <dbReference type="EC" id="2.7.1.24"/>
    </reaction>
</comment>
<comment type="pathway">
    <text evidence="1">Cofactor biosynthesis; coenzyme A biosynthesis; CoA from (R)-pantothenate: step 5/5.</text>
</comment>
<comment type="subcellular location">
    <subcellularLocation>
        <location evidence="1">Cytoplasm</location>
    </subcellularLocation>
</comment>
<comment type="similarity">
    <text evidence="1">Belongs to the CoaE family.</text>
</comment>
<name>COAE_THET2</name>
<gene>
    <name evidence="1" type="primary">coaE</name>
    <name type="ordered locus">TT_C0557</name>
</gene>
<proteinExistence type="inferred from homology"/>
<keyword id="KW-0067">ATP-binding</keyword>
<keyword id="KW-0173">Coenzyme A biosynthesis</keyword>
<keyword id="KW-0963">Cytoplasm</keyword>
<keyword id="KW-0418">Kinase</keyword>
<keyword id="KW-0547">Nucleotide-binding</keyword>
<keyword id="KW-0808">Transferase</keyword>
<protein>
    <recommendedName>
        <fullName evidence="1">Dephospho-CoA kinase</fullName>
        <ecNumber evidence="1">2.7.1.24</ecNumber>
    </recommendedName>
    <alternativeName>
        <fullName evidence="1">Dephosphocoenzyme A kinase</fullName>
    </alternativeName>
</protein>
<reference key="1">
    <citation type="journal article" date="2004" name="Nat. Biotechnol.">
        <title>The genome sequence of the extreme thermophile Thermus thermophilus.</title>
        <authorList>
            <person name="Henne A."/>
            <person name="Brueggemann H."/>
            <person name="Raasch C."/>
            <person name="Wiezer A."/>
            <person name="Hartsch T."/>
            <person name="Liesegang H."/>
            <person name="Johann A."/>
            <person name="Lienard T."/>
            <person name="Gohl O."/>
            <person name="Martinez-Arias R."/>
            <person name="Jacobi C."/>
            <person name="Starkuviene V."/>
            <person name="Schlenczeck S."/>
            <person name="Dencker S."/>
            <person name="Huber R."/>
            <person name="Klenk H.-P."/>
            <person name="Kramer W."/>
            <person name="Merkl R."/>
            <person name="Gottschalk G."/>
            <person name="Fritz H.-J."/>
        </authorList>
    </citation>
    <scope>NUCLEOTIDE SEQUENCE [LARGE SCALE GENOMIC DNA]</scope>
    <source>
        <strain>ATCC BAA-163 / DSM 7039 / HB27</strain>
    </source>
</reference>